<proteinExistence type="inferred from homology"/>
<dbReference type="EC" id="2.1.3.3" evidence="2"/>
<dbReference type="EMBL" id="BX571857">
    <property type="protein sequence ID" value="CAG42878.1"/>
    <property type="molecule type" value="Genomic_DNA"/>
</dbReference>
<dbReference type="RefSeq" id="WP_000793612.1">
    <property type="nucleotide sequence ID" value="NC_002953.3"/>
</dbReference>
<dbReference type="SMR" id="Q6GA45"/>
<dbReference type="KEGG" id="sas:SAS1102"/>
<dbReference type="HOGENOM" id="CLU_043846_3_1_9"/>
<dbReference type="UniPathway" id="UPA00068">
    <property type="reaction ID" value="UER00112"/>
</dbReference>
<dbReference type="GO" id="GO:0005737">
    <property type="term" value="C:cytoplasm"/>
    <property type="evidence" value="ECO:0007669"/>
    <property type="project" value="UniProtKB-SubCell"/>
</dbReference>
<dbReference type="GO" id="GO:0016597">
    <property type="term" value="F:amino acid binding"/>
    <property type="evidence" value="ECO:0007669"/>
    <property type="project" value="InterPro"/>
</dbReference>
<dbReference type="GO" id="GO:0004585">
    <property type="term" value="F:ornithine carbamoyltransferase activity"/>
    <property type="evidence" value="ECO:0007669"/>
    <property type="project" value="UniProtKB-UniRule"/>
</dbReference>
<dbReference type="GO" id="GO:0042450">
    <property type="term" value="P:arginine biosynthetic process via ornithine"/>
    <property type="evidence" value="ECO:0007669"/>
    <property type="project" value="TreeGrafter"/>
</dbReference>
<dbReference type="GO" id="GO:0019240">
    <property type="term" value="P:citrulline biosynthetic process"/>
    <property type="evidence" value="ECO:0007669"/>
    <property type="project" value="TreeGrafter"/>
</dbReference>
<dbReference type="GO" id="GO:0006526">
    <property type="term" value="P:L-arginine biosynthetic process"/>
    <property type="evidence" value="ECO:0007669"/>
    <property type="project" value="UniProtKB-UniRule"/>
</dbReference>
<dbReference type="FunFam" id="3.40.50.1370:FF:000004">
    <property type="entry name" value="Ornithine carbamoyltransferase"/>
    <property type="match status" value="1"/>
</dbReference>
<dbReference type="Gene3D" id="3.40.50.1370">
    <property type="entry name" value="Aspartate/ornithine carbamoyltransferase"/>
    <property type="match status" value="2"/>
</dbReference>
<dbReference type="HAMAP" id="MF_01109">
    <property type="entry name" value="OTCase"/>
    <property type="match status" value="1"/>
</dbReference>
<dbReference type="InterPro" id="IPR006132">
    <property type="entry name" value="Asp/Orn_carbamoyltranf_P-bd"/>
</dbReference>
<dbReference type="InterPro" id="IPR006130">
    <property type="entry name" value="Asp/Orn_carbamoylTrfase"/>
</dbReference>
<dbReference type="InterPro" id="IPR036901">
    <property type="entry name" value="Asp/Orn_carbamoylTrfase_sf"/>
</dbReference>
<dbReference type="InterPro" id="IPR006131">
    <property type="entry name" value="Asp_carbamoyltransf_Asp/Orn-bd"/>
</dbReference>
<dbReference type="InterPro" id="IPR002292">
    <property type="entry name" value="Orn/put_carbamltrans"/>
</dbReference>
<dbReference type="InterPro" id="IPR024904">
    <property type="entry name" value="OTCase_ArgI"/>
</dbReference>
<dbReference type="NCBIfam" id="TIGR00658">
    <property type="entry name" value="orni_carb_tr"/>
    <property type="match status" value="1"/>
</dbReference>
<dbReference type="NCBIfam" id="NF001986">
    <property type="entry name" value="PRK00779.1"/>
    <property type="match status" value="1"/>
</dbReference>
<dbReference type="NCBIfam" id="NF003286">
    <property type="entry name" value="PRK04284.1"/>
    <property type="match status" value="1"/>
</dbReference>
<dbReference type="PANTHER" id="PTHR45753:SF2">
    <property type="entry name" value="ORNITHINE CARBAMOYLTRANSFERASE"/>
    <property type="match status" value="1"/>
</dbReference>
<dbReference type="PANTHER" id="PTHR45753">
    <property type="entry name" value="ORNITHINE CARBAMOYLTRANSFERASE, MITOCHONDRIAL"/>
    <property type="match status" value="1"/>
</dbReference>
<dbReference type="Pfam" id="PF00185">
    <property type="entry name" value="OTCace"/>
    <property type="match status" value="1"/>
</dbReference>
<dbReference type="Pfam" id="PF02729">
    <property type="entry name" value="OTCace_N"/>
    <property type="match status" value="1"/>
</dbReference>
<dbReference type="PRINTS" id="PR00100">
    <property type="entry name" value="AOTCASE"/>
</dbReference>
<dbReference type="PRINTS" id="PR00102">
    <property type="entry name" value="OTCASE"/>
</dbReference>
<dbReference type="SUPFAM" id="SSF53671">
    <property type="entry name" value="Aspartate/ornithine carbamoyltransferase"/>
    <property type="match status" value="1"/>
</dbReference>
<dbReference type="PROSITE" id="PS00097">
    <property type="entry name" value="CARBAMOYLTRANSFERASE"/>
    <property type="match status" value="1"/>
</dbReference>
<keyword id="KW-0028">Amino-acid biosynthesis</keyword>
<keyword id="KW-0055">Arginine biosynthesis</keyword>
<keyword id="KW-0963">Cytoplasm</keyword>
<keyword id="KW-0808">Transferase</keyword>
<comment type="function">
    <text evidence="1">Reversibly catalyzes the transfer of the carbamoyl group from carbamoyl phosphate (CP) to the N(epsilon) atom of ornithine (ORN) to produce L-citrulline.</text>
</comment>
<comment type="catalytic activity">
    <reaction evidence="2">
        <text>carbamoyl phosphate + L-ornithine = L-citrulline + phosphate + H(+)</text>
        <dbReference type="Rhea" id="RHEA:19513"/>
        <dbReference type="ChEBI" id="CHEBI:15378"/>
        <dbReference type="ChEBI" id="CHEBI:43474"/>
        <dbReference type="ChEBI" id="CHEBI:46911"/>
        <dbReference type="ChEBI" id="CHEBI:57743"/>
        <dbReference type="ChEBI" id="CHEBI:58228"/>
        <dbReference type="EC" id="2.1.3.3"/>
    </reaction>
</comment>
<comment type="pathway">
    <text evidence="2">Amino-acid biosynthesis; L-arginine biosynthesis; L-arginine from L-ornithine and carbamoyl phosphate: step 1/3.</text>
</comment>
<comment type="subcellular location">
    <subcellularLocation>
        <location evidence="2">Cytoplasm</location>
    </subcellularLocation>
</comment>
<comment type="similarity">
    <text evidence="2">Belongs to the aspartate/ornithine carbamoyltransferase superfamily. OTCase family.</text>
</comment>
<evidence type="ECO:0000250" key="1"/>
<evidence type="ECO:0000255" key="2">
    <source>
        <dbReference type="HAMAP-Rule" id="MF_01109"/>
    </source>
</evidence>
<reference key="1">
    <citation type="journal article" date="2004" name="Proc. Natl. Acad. Sci. U.S.A.">
        <title>Complete genomes of two clinical Staphylococcus aureus strains: evidence for the rapid evolution of virulence and drug resistance.</title>
        <authorList>
            <person name="Holden M.T.G."/>
            <person name="Feil E.J."/>
            <person name="Lindsay J.A."/>
            <person name="Peacock S.J."/>
            <person name="Day N.P.J."/>
            <person name="Enright M.C."/>
            <person name="Foster T.J."/>
            <person name="Moore C.E."/>
            <person name="Hurst L."/>
            <person name="Atkin R."/>
            <person name="Barron A."/>
            <person name="Bason N."/>
            <person name="Bentley S.D."/>
            <person name="Chillingworth C."/>
            <person name="Chillingworth T."/>
            <person name="Churcher C."/>
            <person name="Clark L."/>
            <person name="Corton C."/>
            <person name="Cronin A."/>
            <person name="Doggett J."/>
            <person name="Dowd L."/>
            <person name="Feltwell T."/>
            <person name="Hance Z."/>
            <person name="Harris B."/>
            <person name="Hauser H."/>
            <person name="Holroyd S."/>
            <person name="Jagels K."/>
            <person name="James K.D."/>
            <person name="Lennard N."/>
            <person name="Line A."/>
            <person name="Mayes R."/>
            <person name="Moule S."/>
            <person name="Mungall K."/>
            <person name="Ormond D."/>
            <person name="Quail M.A."/>
            <person name="Rabbinowitsch E."/>
            <person name="Rutherford K.M."/>
            <person name="Sanders M."/>
            <person name="Sharp S."/>
            <person name="Simmonds M."/>
            <person name="Stevens K."/>
            <person name="Whitehead S."/>
            <person name="Barrell B.G."/>
            <person name="Spratt B.G."/>
            <person name="Parkhill J."/>
        </authorList>
    </citation>
    <scope>NUCLEOTIDE SEQUENCE [LARGE SCALE GENOMIC DNA]</scope>
    <source>
        <strain>MSSA476</strain>
    </source>
</reference>
<organism>
    <name type="scientific">Staphylococcus aureus (strain MSSA476)</name>
    <dbReference type="NCBI Taxonomy" id="282459"/>
    <lineage>
        <taxon>Bacteria</taxon>
        <taxon>Bacillati</taxon>
        <taxon>Bacillota</taxon>
        <taxon>Bacilli</taxon>
        <taxon>Bacillales</taxon>
        <taxon>Staphylococcaceae</taxon>
        <taxon>Staphylococcus</taxon>
    </lineage>
</organism>
<sequence length="333" mass="37534">MKNLRNRSFLTLLDFSRQEVEFLLTLSEDLKRAKYIGTEKPMLKNKNIALLFEKDSTRTRCAFEVAAHDQGANVTYLGPTGSQMGKKETTKDTARVLGGMYDGIEYRGFSQRTVETLAEYSGVPVWNGLTDEDHPTQVLADFLTAKEVLKKDYADINFTYVGDGRNNVANALMQGAAIMGMNFHLVCPKELNPTDELLNRCKNIAAENGGNILITDNIDQGVKGSDVIYTDVWVSMGEPDEVWKERLELLKPYQVNKEMMDKTGNPNVIFEHCLPSFHNADTKIGQQIFEKYGIREMEVTDEVFESKASVVFQEAENRMHTIKAVMVATLGEF</sequence>
<name>OTC_STAAS</name>
<feature type="chain" id="PRO_0000113017" description="Ornithine carbamoyltransferase">
    <location>
        <begin position="1"/>
        <end position="333"/>
    </location>
</feature>
<feature type="binding site" evidence="2">
    <location>
        <begin position="56"/>
        <end position="59"/>
    </location>
    <ligand>
        <name>carbamoyl phosphate</name>
        <dbReference type="ChEBI" id="CHEBI:58228"/>
    </ligand>
</feature>
<feature type="binding site" evidence="2">
    <location>
        <position position="83"/>
    </location>
    <ligand>
        <name>carbamoyl phosphate</name>
        <dbReference type="ChEBI" id="CHEBI:58228"/>
    </ligand>
</feature>
<feature type="binding site" evidence="2">
    <location>
        <position position="107"/>
    </location>
    <ligand>
        <name>carbamoyl phosphate</name>
        <dbReference type="ChEBI" id="CHEBI:58228"/>
    </ligand>
</feature>
<feature type="binding site" evidence="2">
    <location>
        <begin position="134"/>
        <end position="137"/>
    </location>
    <ligand>
        <name>carbamoyl phosphate</name>
        <dbReference type="ChEBI" id="CHEBI:58228"/>
    </ligand>
</feature>
<feature type="binding site" evidence="2">
    <location>
        <position position="167"/>
    </location>
    <ligand>
        <name>L-ornithine</name>
        <dbReference type="ChEBI" id="CHEBI:46911"/>
    </ligand>
</feature>
<feature type="binding site" evidence="2">
    <location>
        <position position="231"/>
    </location>
    <ligand>
        <name>L-ornithine</name>
        <dbReference type="ChEBI" id="CHEBI:46911"/>
    </ligand>
</feature>
<feature type="binding site" evidence="2">
    <location>
        <begin position="235"/>
        <end position="236"/>
    </location>
    <ligand>
        <name>L-ornithine</name>
        <dbReference type="ChEBI" id="CHEBI:46911"/>
    </ligand>
</feature>
<feature type="binding site" evidence="2">
    <location>
        <begin position="273"/>
        <end position="274"/>
    </location>
    <ligand>
        <name>carbamoyl phosphate</name>
        <dbReference type="ChEBI" id="CHEBI:58228"/>
    </ligand>
</feature>
<feature type="binding site" evidence="2">
    <location>
        <position position="318"/>
    </location>
    <ligand>
        <name>carbamoyl phosphate</name>
        <dbReference type="ChEBI" id="CHEBI:58228"/>
    </ligand>
</feature>
<protein>
    <recommendedName>
        <fullName evidence="2">Ornithine carbamoyltransferase</fullName>
        <shortName evidence="2">OTCase</shortName>
        <ecNumber evidence="2">2.1.3.3</ecNumber>
    </recommendedName>
</protein>
<gene>
    <name evidence="2" type="primary">argF</name>
    <name type="ordered locus">SAS1102</name>
</gene>
<accession>Q6GA45</accession>